<gene>
    <name evidence="1" type="primary">mdh</name>
    <name type="ordered locus">Xfasm12_0550</name>
</gene>
<name>MDH_XYLFM</name>
<feature type="chain" id="PRO_1000191634" description="Malate dehydrogenase">
    <location>
        <begin position="1"/>
        <end position="328"/>
    </location>
</feature>
<feature type="active site" description="Proton acceptor" evidence="1">
    <location>
        <position position="189"/>
    </location>
</feature>
<feature type="binding site" evidence="1">
    <location>
        <begin position="11"/>
        <end position="17"/>
    </location>
    <ligand>
        <name>NAD(+)</name>
        <dbReference type="ChEBI" id="CHEBI:57540"/>
    </ligand>
</feature>
<feature type="binding site" evidence="1">
    <location>
        <position position="94"/>
    </location>
    <ligand>
        <name>substrate</name>
    </ligand>
</feature>
<feature type="binding site" evidence="1">
    <location>
        <position position="100"/>
    </location>
    <ligand>
        <name>substrate</name>
    </ligand>
</feature>
<feature type="binding site" evidence="1">
    <location>
        <position position="107"/>
    </location>
    <ligand>
        <name>NAD(+)</name>
        <dbReference type="ChEBI" id="CHEBI:57540"/>
    </ligand>
</feature>
<feature type="binding site" evidence="1">
    <location>
        <position position="114"/>
    </location>
    <ligand>
        <name>NAD(+)</name>
        <dbReference type="ChEBI" id="CHEBI:57540"/>
    </ligand>
</feature>
<feature type="binding site" evidence="1">
    <location>
        <begin position="131"/>
        <end position="133"/>
    </location>
    <ligand>
        <name>NAD(+)</name>
        <dbReference type="ChEBI" id="CHEBI:57540"/>
    </ligand>
</feature>
<feature type="binding site" evidence="1">
    <location>
        <position position="133"/>
    </location>
    <ligand>
        <name>substrate</name>
    </ligand>
</feature>
<feature type="binding site" evidence="1">
    <location>
        <position position="164"/>
    </location>
    <ligand>
        <name>substrate</name>
    </ligand>
</feature>
<comment type="function">
    <text evidence="1">Catalyzes the reversible oxidation of malate to oxaloacetate.</text>
</comment>
<comment type="catalytic activity">
    <reaction evidence="1">
        <text>(S)-malate + NAD(+) = oxaloacetate + NADH + H(+)</text>
        <dbReference type="Rhea" id="RHEA:21432"/>
        <dbReference type="ChEBI" id="CHEBI:15378"/>
        <dbReference type="ChEBI" id="CHEBI:15589"/>
        <dbReference type="ChEBI" id="CHEBI:16452"/>
        <dbReference type="ChEBI" id="CHEBI:57540"/>
        <dbReference type="ChEBI" id="CHEBI:57945"/>
        <dbReference type="EC" id="1.1.1.37"/>
    </reaction>
</comment>
<comment type="similarity">
    <text evidence="1">Belongs to the LDH/MDH superfamily. MDH type 2 family.</text>
</comment>
<reference key="1">
    <citation type="journal article" date="2010" name="J. Bacteriol.">
        <title>Whole genome sequences of two Xylella fastidiosa strains (M12 and M23) causing almond leaf scorch disease in California.</title>
        <authorList>
            <person name="Chen J."/>
            <person name="Xie G."/>
            <person name="Han S."/>
            <person name="Chertkov O."/>
            <person name="Sims D."/>
            <person name="Civerolo E.L."/>
        </authorList>
    </citation>
    <scope>NUCLEOTIDE SEQUENCE [LARGE SCALE GENOMIC DNA]</scope>
    <source>
        <strain>M12</strain>
    </source>
</reference>
<proteinExistence type="inferred from homology"/>
<protein>
    <recommendedName>
        <fullName evidence="1">Malate dehydrogenase</fullName>
        <ecNumber evidence="1">1.1.1.37</ecNumber>
    </recommendedName>
</protein>
<sequence>MKALVRVAVTGAAGQIGYSLLFRIAAGEMFGKDRSVILQMLELPDEKAQAALKGVMMELEDCAFPLLAGMVVTDNPDIAFKDADAALLVGSRPRGPGMERKDLLMENAKIFTAQGAALNKVARRDVKVLVVGNPANTNAYIAMKSAPDLNPKHFTAMLRLDHNRALSQLSTKLSKPVANIEKLIVWGNHSPTMYPDYRFATADGTPIIEAINDQAWNANSFIPTVSKRGAAIIEARGLSSAASAANAAIDHMRDWLLGSNGKWITMGVPSDGSYGIPEGMIFGFPVTTTNGEYSIVKDLPIDTFSKTYIDKTLAELEEERASIAHLLR</sequence>
<evidence type="ECO:0000255" key="1">
    <source>
        <dbReference type="HAMAP-Rule" id="MF_01517"/>
    </source>
</evidence>
<keyword id="KW-0520">NAD</keyword>
<keyword id="KW-0560">Oxidoreductase</keyword>
<keyword id="KW-0816">Tricarboxylic acid cycle</keyword>
<dbReference type="EC" id="1.1.1.37" evidence="1"/>
<dbReference type="EMBL" id="CP000941">
    <property type="protein sequence ID" value="ACA11555.1"/>
    <property type="molecule type" value="Genomic_DNA"/>
</dbReference>
<dbReference type="RefSeq" id="WP_004086569.1">
    <property type="nucleotide sequence ID" value="NC_010513.1"/>
</dbReference>
<dbReference type="SMR" id="B0U5Q1"/>
<dbReference type="KEGG" id="xfm:Xfasm12_0550"/>
<dbReference type="HOGENOM" id="CLU_040727_2_0_6"/>
<dbReference type="GO" id="GO:0030060">
    <property type="term" value="F:L-malate dehydrogenase (NAD+) activity"/>
    <property type="evidence" value="ECO:0007669"/>
    <property type="project" value="UniProtKB-UniRule"/>
</dbReference>
<dbReference type="GO" id="GO:0006108">
    <property type="term" value="P:malate metabolic process"/>
    <property type="evidence" value="ECO:0007669"/>
    <property type="project" value="InterPro"/>
</dbReference>
<dbReference type="GO" id="GO:0006099">
    <property type="term" value="P:tricarboxylic acid cycle"/>
    <property type="evidence" value="ECO:0007669"/>
    <property type="project" value="UniProtKB-UniRule"/>
</dbReference>
<dbReference type="CDD" id="cd01338">
    <property type="entry name" value="MDH_chloroplast-like"/>
    <property type="match status" value="1"/>
</dbReference>
<dbReference type="FunFam" id="3.40.50.720:FF:000010">
    <property type="entry name" value="Malate dehydrogenase"/>
    <property type="match status" value="1"/>
</dbReference>
<dbReference type="FunFam" id="3.90.110.10:FF:000002">
    <property type="entry name" value="Malate dehydrogenase"/>
    <property type="match status" value="1"/>
</dbReference>
<dbReference type="Gene3D" id="3.90.110.10">
    <property type="entry name" value="Lactate dehydrogenase/glycoside hydrolase, family 4, C-terminal"/>
    <property type="match status" value="1"/>
</dbReference>
<dbReference type="Gene3D" id="3.40.50.720">
    <property type="entry name" value="NAD(P)-binding Rossmann-like Domain"/>
    <property type="match status" value="1"/>
</dbReference>
<dbReference type="HAMAP" id="MF_01517">
    <property type="entry name" value="Malate_dehydrog_2"/>
    <property type="match status" value="1"/>
</dbReference>
<dbReference type="InterPro" id="IPR001557">
    <property type="entry name" value="L-lactate/malate_DH"/>
</dbReference>
<dbReference type="InterPro" id="IPR022383">
    <property type="entry name" value="Lactate/malate_DH_C"/>
</dbReference>
<dbReference type="InterPro" id="IPR001236">
    <property type="entry name" value="Lactate/malate_DH_N"/>
</dbReference>
<dbReference type="InterPro" id="IPR015955">
    <property type="entry name" value="Lactate_DH/Glyco_Ohase_4_C"/>
</dbReference>
<dbReference type="InterPro" id="IPR010945">
    <property type="entry name" value="Malate_DH_type2"/>
</dbReference>
<dbReference type="InterPro" id="IPR036291">
    <property type="entry name" value="NAD(P)-bd_dom_sf"/>
</dbReference>
<dbReference type="NCBIfam" id="TIGR01759">
    <property type="entry name" value="MalateDH-SF1"/>
    <property type="match status" value="1"/>
</dbReference>
<dbReference type="NCBIfam" id="NF003916">
    <property type="entry name" value="PRK05442.1"/>
    <property type="match status" value="1"/>
</dbReference>
<dbReference type="PANTHER" id="PTHR23382">
    <property type="entry name" value="MALATE DEHYDROGENASE"/>
    <property type="match status" value="1"/>
</dbReference>
<dbReference type="Pfam" id="PF02866">
    <property type="entry name" value="Ldh_1_C"/>
    <property type="match status" value="1"/>
</dbReference>
<dbReference type="Pfam" id="PF00056">
    <property type="entry name" value="Ldh_1_N"/>
    <property type="match status" value="1"/>
</dbReference>
<dbReference type="PIRSF" id="PIRSF000102">
    <property type="entry name" value="Lac_mal_DH"/>
    <property type="match status" value="1"/>
</dbReference>
<dbReference type="SUPFAM" id="SSF56327">
    <property type="entry name" value="LDH C-terminal domain-like"/>
    <property type="match status" value="1"/>
</dbReference>
<dbReference type="SUPFAM" id="SSF51735">
    <property type="entry name" value="NAD(P)-binding Rossmann-fold domains"/>
    <property type="match status" value="1"/>
</dbReference>
<organism>
    <name type="scientific">Xylella fastidiosa (strain M12)</name>
    <dbReference type="NCBI Taxonomy" id="405440"/>
    <lineage>
        <taxon>Bacteria</taxon>
        <taxon>Pseudomonadati</taxon>
        <taxon>Pseudomonadota</taxon>
        <taxon>Gammaproteobacteria</taxon>
        <taxon>Lysobacterales</taxon>
        <taxon>Lysobacteraceae</taxon>
        <taxon>Xylella</taxon>
    </lineage>
</organism>
<accession>B0U5Q1</accession>